<sequence length="189" mass="21884">MKQMNYIINEENELRFFSIIESLLFASGEPLGLKDISEIIELNTLDTKEILQKMIREYEIEKRGIKLIEIEKKYQLVTKEENSCFIEQLLKTNSSQSLSQAALETLSIVAYKQPVTRVDVDEIRGVKSDRALQTLLQKSLIKETGRLDVPGRPILYSTTEEFLKHFGLESIKELPSLEELLEEFQEEDL</sequence>
<name>SCPB_CLOTE</name>
<gene>
    <name evidence="1" type="primary">scpB</name>
    <name type="ordered locus">CTC_01528</name>
</gene>
<dbReference type="EMBL" id="AE015927">
    <property type="protein sequence ID" value="AAO36079.1"/>
    <property type="molecule type" value="Genomic_DNA"/>
</dbReference>
<dbReference type="RefSeq" id="WP_011099739.1">
    <property type="nucleotide sequence ID" value="NC_004557.1"/>
</dbReference>
<dbReference type="SMR" id="Q894L3"/>
<dbReference type="STRING" id="212717.CTC_01528"/>
<dbReference type="GeneID" id="24253471"/>
<dbReference type="KEGG" id="ctc:CTC_01528"/>
<dbReference type="HOGENOM" id="CLU_045647_5_3_9"/>
<dbReference type="OrthoDB" id="9806226at2"/>
<dbReference type="Proteomes" id="UP000001412">
    <property type="component" value="Chromosome"/>
</dbReference>
<dbReference type="GO" id="GO:0005737">
    <property type="term" value="C:cytoplasm"/>
    <property type="evidence" value="ECO:0007669"/>
    <property type="project" value="UniProtKB-SubCell"/>
</dbReference>
<dbReference type="GO" id="GO:0051301">
    <property type="term" value="P:cell division"/>
    <property type="evidence" value="ECO:0007669"/>
    <property type="project" value="UniProtKB-KW"/>
</dbReference>
<dbReference type="GO" id="GO:0051304">
    <property type="term" value="P:chromosome separation"/>
    <property type="evidence" value="ECO:0007669"/>
    <property type="project" value="InterPro"/>
</dbReference>
<dbReference type="GO" id="GO:0006260">
    <property type="term" value="P:DNA replication"/>
    <property type="evidence" value="ECO:0007669"/>
    <property type="project" value="UniProtKB-UniRule"/>
</dbReference>
<dbReference type="Gene3D" id="1.10.10.10">
    <property type="entry name" value="Winged helix-like DNA-binding domain superfamily/Winged helix DNA-binding domain"/>
    <property type="match status" value="2"/>
</dbReference>
<dbReference type="HAMAP" id="MF_01804">
    <property type="entry name" value="ScpB"/>
    <property type="match status" value="1"/>
</dbReference>
<dbReference type="InterPro" id="IPR005234">
    <property type="entry name" value="ScpB_csome_segregation"/>
</dbReference>
<dbReference type="InterPro" id="IPR036388">
    <property type="entry name" value="WH-like_DNA-bd_sf"/>
</dbReference>
<dbReference type="InterPro" id="IPR036390">
    <property type="entry name" value="WH_DNA-bd_sf"/>
</dbReference>
<dbReference type="NCBIfam" id="TIGR00281">
    <property type="entry name" value="SMC-Scp complex subunit ScpB"/>
    <property type="match status" value="1"/>
</dbReference>
<dbReference type="PANTHER" id="PTHR34298">
    <property type="entry name" value="SEGREGATION AND CONDENSATION PROTEIN B"/>
    <property type="match status" value="1"/>
</dbReference>
<dbReference type="PANTHER" id="PTHR34298:SF2">
    <property type="entry name" value="SEGREGATION AND CONDENSATION PROTEIN B"/>
    <property type="match status" value="1"/>
</dbReference>
<dbReference type="Pfam" id="PF04079">
    <property type="entry name" value="SMC_ScpB"/>
    <property type="match status" value="1"/>
</dbReference>
<dbReference type="PIRSF" id="PIRSF019345">
    <property type="entry name" value="ScpB"/>
    <property type="match status" value="1"/>
</dbReference>
<dbReference type="SUPFAM" id="SSF46785">
    <property type="entry name" value="Winged helix' DNA-binding domain"/>
    <property type="match status" value="2"/>
</dbReference>
<proteinExistence type="inferred from homology"/>
<comment type="function">
    <text evidence="1">Participates in chromosomal partition during cell division. May act via the formation of a condensin-like complex containing Smc and ScpA that pull DNA away from mid-cell into both cell halves.</text>
</comment>
<comment type="subunit">
    <text evidence="1">Homodimer. Homodimerization may be required to stabilize the binding of ScpA to the Smc head domains. Component of a cohesin-like complex composed of ScpA, ScpB and the Smc homodimer, in which ScpA and ScpB bind to the head domain of Smc. The presence of the three proteins is required for the association of the complex with DNA.</text>
</comment>
<comment type="subcellular location">
    <subcellularLocation>
        <location evidence="1">Cytoplasm</location>
    </subcellularLocation>
    <text evidence="1">Associated with two foci at the outer edges of the nucleoid region in young cells, and at four foci within both cell halves in older cells.</text>
</comment>
<comment type="similarity">
    <text evidence="1">Belongs to the ScpB family.</text>
</comment>
<reference key="1">
    <citation type="journal article" date="2003" name="Proc. Natl. Acad. Sci. U.S.A.">
        <title>The genome sequence of Clostridium tetani, the causative agent of tetanus disease.</title>
        <authorList>
            <person name="Brueggemann H."/>
            <person name="Baeumer S."/>
            <person name="Fricke W.F."/>
            <person name="Wiezer A."/>
            <person name="Liesegang H."/>
            <person name="Decker I."/>
            <person name="Herzberg C."/>
            <person name="Martinez-Arias R."/>
            <person name="Merkl R."/>
            <person name="Henne A."/>
            <person name="Gottschalk G."/>
        </authorList>
    </citation>
    <scope>NUCLEOTIDE SEQUENCE [LARGE SCALE GENOMIC DNA]</scope>
    <source>
        <strain>Massachusetts / E88</strain>
    </source>
</reference>
<evidence type="ECO:0000255" key="1">
    <source>
        <dbReference type="HAMAP-Rule" id="MF_01804"/>
    </source>
</evidence>
<accession>Q894L3</accession>
<keyword id="KW-0131">Cell cycle</keyword>
<keyword id="KW-0132">Cell division</keyword>
<keyword id="KW-0159">Chromosome partition</keyword>
<keyword id="KW-0963">Cytoplasm</keyword>
<keyword id="KW-1185">Reference proteome</keyword>
<protein>
    <recommendedName>
        <fullName evidence="1">Segregation and condensation protein B</fullName>
    </recommendedName>
</protein>
<feature type="chain" id="PRO_0000211130" description="Segregation and condensation protein B">
    <location>
        <begin position="1"/>
        <end position="189"/>
    </location>
</feature>
<organism>
    <name type="scientific">Clostridium tetani (strain Massachusetts / E88)</name>
    <dbReference type="NCBI Taxonomy" id="212717"/>
    <lineage>
        <taxon>Bacteria</taxon>
        <taxon>Bacillati</taxon>
        <taxon>Bacillota</taxon>
        <taxon>Clostridia</taxon>
        <taxon>Eubacteriales</taxon>
        <taxon>Clostridiaceae</taxon>
        <taxon>Clostridium</taxon>
    </lineage>
</organism>